<feature type="chain" id="PRO_0000373583" description="Inner membrane protein E199L">
    <location>
        <begin position="1"/>
        <end position="199"/>
    </location>
</feature>
<feature type="transmembrane region" description="Helical" evidence="2">
    <location>
        <begin position="150"/>
        <end position="170"/>
    </location>
</feature>
<feature type="glycosylation site" description="N-linked (GlcNAc...) asparagine; by host" evidence="2">
    <location>
        <position position="131"/>
    </location>
</feature>
<feature type="sequence conflict" description="In Ref. 1." evidence="3" ref="1">
    <original>D</original>
    <variation>N</variation>
    <location>
        <position position="50"/>
    </location>
</feature>
<feature type="sequence conflict" description="In Ref. 1." evidence="3" ref="1">
    <original>D</original>
    <variation>A</variation>
    <location>
        <position position="59"/>
    </location>
</feature>
<feature type="sequence conflict" description="In Ref. 1." evidence="3" ref="1">
    <original>Q</original>
    <variation>H</variation>
    <location>
        <position position="73"/>
    </location>
</feature>
<feature type="sequence conflict" description="In Ref. 1." evidence="3" ref="1">
    <original>NSGT</original>
    <variation>KLRL</variation>
    <location>
        <begin position="79"/>
        <end position="82"/>
    </location>
</feature>
<organism>
    <name type="scientific">African swine fever virus (isolate Tick/Malawi/Lil 20-1/1983)</name>
    <name type="common">ASFV</name>
    <dbReference type="NCBI Taxonomy" id="10500"/>
    <lineage>
        <taxon>Viruses</taxon>
        <taxon>Varidnaviria</taxon>
        <taxon>Bamfordvirae</taxon>
        <taxon>Nucleocytoviricota</taxon>
        <taxon>Pokkesviricetes</taxon>
        <taxon>Asfuvirales</taxon>
        <taxon>Asfarviridae</taxon>
        <taxon>Asfivirus</taxon>
        <taxon>African swine fever virus</taxon>
    </lineage>
</organism>
<comment type="function">
    <text evidence="1">Essential for viral fusion with host endosomal membrane and core release (By similarity). Not required for virus morphogenesis and egress (By similarity). Induces complete autophagy through the interaction with and down-regulation of host PYCR2 (By similarity).</text>
</comment>
<comment type="subunit">
    <text evidence="1">Interacts with host PYCR2; this interaction results in autophagy activation.</text>
</comment>
<comment type="subcellular location">
    <subcellularLocation>
        <location evidence="1">Virion membrane</location>
    </subcellularLocation>
    <subcellularLocation>
        <location evidence="3">Host membrane</location>
        <topology evidence="1">Single-pass membrane protein</topology>
    </subcellularLocation>
    <text evidence="1">Found in the perinuclear cytoplasmic viral factories during assembly (By similarity). Part of the virion inner membrane (By similarity).</text>
</comment>
<comment type="induction">
    <text evidence="3">Expressed in the late phase of the viral replicative cycle.</text>
</comment>
<comment type="PTM">
    <text evidence="1">Contains intramolecular disulfide bonds.</text>
</comment>
<comment type="similarity">
    <text evidence="3">Belongs to the asfivirus E199L family.</text>
</comment>
<comment type="sequence caution" evidence="3">
    <conflict type="frameshift">
        <sequence resource="EMBL-CDS" id="CAA50838"/>
    </conflict>
</comment>
<protein>
    <recommendedName>
        <fullName evidence="3">Inner membrane protein E199L</fullName>
        <shortName>pE199L</shortName>
    </recommendedName>
</protein>
<reference key="1">
    <citation type="journal article" date="1994" name="J. Gen. Virol.">
        <title>Nucleotide sequence of a 55 kbp region from the right end of the genome of a pathogenic African swine fever virus isolate (Malawi LIL20/1).</title>
        <authorList>
            <person name="Dixon L.K."/>
            <person name="Twigg S.R.F."/>
            <person name="Baylis S.A."/>
            <person name="Vydelingum S."/>
            <person name="Bristow C."/>
            <person name="Hammond J.M."/>
            <person name="Smith G.L."/>
        </authorList>
    </citation>
    <scope>NUCLEOTIDE SEQUENCE [GENOMIC DNA]</scope>
</reference>
<reference key="2">
    <citation type="submission" date="2003-03" db="EMBL/GenBank/DDBJ databases">
        <title>African swine fever virus genomes.</title>
        <authorList>
            <person name="Kutish G.F."/>
            <person name="Rock D.L."/>
        </authorList>
    </citation>
    <scope>NUCLEOTIDE SEQUENCE [LARGE SCALE GENOMIC DNA]</scope>
</reference>
<reference key="3">
    <citation type="journal article" date="1996" name="J. Gen. Virol.">
        <title>Characterization of the African swine fever virion protein j18L.</title>
        <authorList>
            <person name="Sun H."/>
            <person name="Jenson J."/>
            <person name="Dixon L.K."/>
            <person name="Parkhouse R.M.E."/>
        </authorList>
    </citation>
    <scope>SUBCELLULAR LOCATION</scope>
</reference>
<accession>Q65242</accession>
<evidence type="ECO:0000250" key="1">
    <source>
        <dbReference type="UniProtKB" id="Q65198"/>
    </source>
</evidence>
<evidence type="ECO:0000255" key="2"/>
<evidence type="ECO:0000305" key="3"/>
<gene>
    <name type="ordered locus">Mal-138</name>
    <name type="ORF">j18L</name>
</gene>
<proteinExistence type="inferred from homology"/>
<dbReference type="EMBL" id="X71982">
    <property type="protein sequence ID" value="CAA50838.1"/>
    <property type="status" value="ALT_FRAME"/>
    <property type="molecule type" value="Genomic_DNA"/>
</dbReference>
<dbReference type="EMBL" id="AY261361">
    <property type="status" value="NOT_ANNOTATED_CDS"/>
    <property type="molecule type" value="Genomic_DNA"/>
</dbReference>
<dbReference type="SMR" id="Q65242"/>
<dbReference type="TCDB" id="1.G.23.1.1">
    <property type="family name" value="the african swine fever virus (asfv) fusion protein pe199l (asfv-fp) family"/>
</dbReference>
<dbReference type="Proteomes" id="UP000000860">
    <property type="component" value="Segment"/>
</dbReference>
<dbReference type="GO" id="GO:0033644">
    <property type="term" value="C:host cell membrane"/>
    <property type="evidence" value="ECO:0007669"/>
    <property type="project" value="UniProtKB-SubCell"/>
</dbReference>
<dbReference type="GO" id="GO:0016020">
    <property type="term" value="C:membrane"/>
    <property type="evidence" value="ECO:0007669"/>
    <property type="project" value="UniProtKB-KW"/>
</dbReference>
<dbReference type="GO" id="GO:0055036">
    <property type="term" value="C:virion membrane"/>
    <property type="evidence" value="ECO:0007669"/>
    <property type="project" value="UniProtKB-SubCell"/>
</dbReference>
<dbReference type="GO" id="GO:0039520">
    <property type="term" value="P:symbiont-mediated activation of host autophagy"/>
    <property type="evidence" value="ECO:0007669"/>
    <property type="project" value="UniProtKB-KW"/>
</dbReference>
<name>VF199_ASFM2</name>
<keyword id="KW-1072">Activation of host autophagy by virus</keyword>
<keyword id="KW-1015">Disulfide bond</keyword>
<keyword id="KW-0325">Glycoprotein</keyword>
<keyword id="KW-1043">Host membrane</keyword>
<keyword id="KW-0945">Host-virus interaction</keyword>
<keyword id="KW-0426">Late protein</keyword>
<keyword id="KW-0472">Membrane</keyword>
<keyword id="KW-0812">Transmembrane</keyword>
<keyword id="KW-1133">Transmembrane helix</keyword>
<keyword id="KW-0946">Virion</keyword>
<organismHost>
    <name type="scientific">Ornithodoros</name>
    <name type="common">relapsing fever ticks</name>
    <dbReference type="NCBI Taxonomy" id="6937"/>
</organismHost>
<organismHost>
    <name type="scientific">Phacochoerus aethiopicus</name>
    <name type="common">Warthog</name>
    <dbReference type="NCBI Taxonomy" id="85517"/>
</organismHost>
<organismHost>
    <name type="scientific">Phacochoerus africanus</name>
    <name type="common">Warthog</name>
    <dbReference type="NCBI Taxonomy" id="41426"/>
</organismHost>
<organismHost>
    <name type="scientific">Potamochoerus larvatus</name>
    <name type="common">Bushpig</name>
    <dbReference type="NCBI Taxonomy" id="273792"/>
</organismHost>
<organismHost>
    <name type="scientific">Sus scrofa</name>
    <name type="common">Pig</name>
    <dbReference type="NCBI Taxonomy" id="9823"/>
</organismHost>
<sequence length="199" mass="22065">MSCMPISTKCNDIWVDFSCTGPSLSELQKKEPKAWAAILRSQRSQQTAEDDTIIGSICDKQGLCSKNEYAYSQYCACVNSGTLWAECAFAPCNGNKNAYKTTEHRNILTNKQCPSGLTICQNIAEYGGTGNISDLYQNFNCNSVINTFLINVMNHPFLTLILIILILVIIYRLMSSSGGKHNEDKLPPPSLIFSNLNNF</sequence>